<organism>
    <name type="scientific">Mycobacterium tuberculosis (strain ATCC 25618 / H37Rv)</name>
    <dbReference type="NCBI Taxonomy" id="83332"/>
    <lineage>
        <taxon>Bacteria</taxon>
        <taxon>Bacillati</taxon>
        <taxon>Actinomycetota</taxon>
        <taxon>Actinomycetes</taxon>
        <taxon>Mycobacteriales</taxon>
        <taxon>Mycobacteriaceae</taxon>
        <taxon>Mycobacterium</taxon>
        <taxon>Mycobacterium tuberculosis complex</taxon>
    </lineage>
</organism>
<protein>
    <recommendedName>
        <fullName>Putative lipoprotein LppP</fullName>
    </recommendedName>
</protein>
<evidence type="ECO:0000255" key="1">
    <source>
        <dbReference type="PROSITE-ProRule" id="PRU00303"/>
    </source>
</evidence>
<reference key="1">
    <citation type="journal article" date="1998" name="Nature">
        <title>Deciphering the biology of Mycobacterium tuberculosis from the complete genome sequence.</title>
        <authorList>
            <person name="Cole S.T."/>
            <person name="Brosch R."/>
            <person name="Parkhill J."/>
            <person name="Garnier T."/>
            <person name="Churcher C.M."/>
            <person name="Harris D.E."/>
            <person name="Gordon S.V."/>
            <person name="Eiglmeier K."/>
            <person name="Gas S."/>
            <person name="Barry C.E. III"/>
            <person name="Tekaia F."/>
            <person name="Badcock K."/>
            <person name="Basham D."/>
            <person name="Brown D."/>
            <person name="Chillingworth T."/>
            <person name="Connor R."/>
            <person name="Davies R.M."/>
            <person name="Devlin K."/>
            <person name="Feltwell T."/>
            <person name="Gentles S."/>
            <person name="Hamlin N."/>
            <person name="Holroyd S."/>
            <person name="Hornsby T."/>
            <person name="Jagels K."/>
            <person name="Krogh A."/>
            <person name="McLean J."/>
            <person name="Moule S."/>
            <person name="Murphy L.D."/>
            <person name="Oliver S."/>
            <person name="Osborne J."/>
            <person name="Quail M.A."/>
            <person name="Rajandream M.A."/>
            <person name="Rogers J."/>
            <person name="Rutter S."/>
            <person name="Seeger K."/>
            <person name="Skelton S."/>
            <person name="Squares S."/>
            <person name="Squares R."/>
            <person name="Sulston J.E."/>
            <person name="Taylor K."/>
            <person name="Whitehead S."/>
            <person name="Barrell B.G."/>
        </authorList>
    </citation>
    <scope>NUCLEOTIDE SEQUENCE [LARGE SCALE GENOMIC DNA]</scope>
    <source>
        <strain>ATCC 25618 / H37Rv</strain>
    </source>
</reference>
<reference key="2">
    <citation type="journal article" date="2011" name="Mol. Cell. Proteomics">
        <title>Proteogenomic analysis of Mycobacterium tuberculosis by high resolution mass spectrometry.</title>
        <authorList>
            <person name="Kelkar D.S."/>
            <person name="Kumar D."/>
            <person name="Kumar P."/>
            <person name="Balakrishnan L."/>
            <person name="Muthusamy B."/>
            <person name="Yadav A.K."/>
            <person name="Shrivastava P."/>
            <person name="Marimuthu A."/>
            <person name="Anand S."/>
            <person name="Sundaram H."/>
            <person name="Kingsbury R."/>
            <person name="Harsha H.C."/>
            <person name="Nair B."/>
            <person name="Prasad T.S."/>
            <person name="Chauhan D.S."/>
            <person name="Katoch K."/>
            <person name="Katoch V.M."/>
            <person name="Kumar P."/>
            <person name="Chaerkady R."/>
            <person name="Ramachandran S."/>
            <person name="Dash D."/>
            <person name="Pandey A."/>
        </authorList>
    </citation>
    <scope>IDENTIFICATION BY MASS SPECTROMETRY [LARGE SCALE ANALYSIS]</scope>
    <source>
        <strain>ATCC 25618 / H37Rv</strain>
    </source>
</reference>
<keyword id="KW-1003">Cell membrane</keyword>
<keyword id="KW-0449">Lipoprotein</keyword>
<keyword id="KW-0472">Membrane</keyword>
<keyword id="KW-0564">Palmitate</keyword>
<keyword id="KW-1185">Reference proteome</keyword>
<keyword id="KW-0732">Signal</keyword>
<sequence length="175" mass="18860">MRRQRSAVPILALLALLALLALIVGLGASGCAWKPPTTRPSPPNTCKDSDGPTADTVRQAIAAVPIVVPGSKWVEITRGHTRNCRLHWVQIIPTIASQSTPQQLLFFDRNIPLGSPTRNPKPYITVLPAGDDTVTVQYQWQIGSDQECCPTGIGTVRFHIGSDGKLEALGSIPHQ</sequence>
<dbReference type="EMBL" id="AL123456">
    <property type="protein sequence ID" value="CCP45117.1"/>
    <property type="molecule type" value="Genomic_DNA"/>
</dbReference>
<dbReference type="PIR" id="C70705">
    <property type="entry name" value="C70705"/>
</dbReference>
<dbReference type="RefSeq" id="NP_216846.1">
    <property type="nucleotide sequence ID" value="NC_000962.3"/>
</dbReference>
<dbReference type="RefSeq" id="WP_003411974.1">
    <property type="nucleotide sequence ID" value="NZ_NVQJ01000012.1"/>
</dbReference>
<dbReference type="STRING" id="83332.Rv2330c"/>
<dbReference type="PaxDb" id="83332-Rv2330c"/>
<dbReference type="DNASU" id="888072"/>
<dbReference type="GeneID" id="888072"/>
<dbReference type="KEGG" id="mtu:Rv2330c"/>
<dbReference type="KEGG" id="mtv:RVBD_2330c"/>
<dbReference type="PATRIC" id="fig|83332.111.peg.2595"/>
<dbReference type="TubercuList" id="Rv2330c"/>
<dbReference type="eggNOG" id="ENOG5030R77">
    <property type="taxonomic scope" value="Bacteria"/>
</dbReference>
<dbReference type="InParanoid" id="P9WK69"/>
<dbReference type="OrthoDB" id="4427395at2"/>
<dbReference type="Proteomes" id="UP000001584">
    <property type="component" value="Chromosome"/>
</dbReference>
<dbReference type="GO" id="GO:0005886">
    <property type="term" value="C:plasma membrane"/>
    <property type="evidence" value="ECO:0007669"/>
    <property type="project" value="UniProtKB-SubCell"/>
</dbReference>
<dbReference type="InterPro" id="IPR025971">
    <property type="entry name" value="LppP/LprE"/>
</dbReference>
<dbReference type="Pfam" id="PF14041">
    <property type="entry name" value="Lipoprotein_21"/>
    <property type="match status" value="1"/>
</dbReference>
<dbReference type="PROSITE" id="PS51257">
    <property type="entry name" value="PROKAR_LIPOPROTEIN"/>
    <property type="match status" value="1"/>
</dbReference>
<gene>
    <name type="primary">lppP</name>
    <name type="ordered locus">Rv2330c</name>
    <name type="ORF">MTCY3G12.04</name>
</gene>
<feature type="signal peptide" evidence="1">
    <location>
        <begin position="1"/>
        <end position="30"/>
    </location>
</feature>
<feature type="chain" id="PRO_0000018116" description="Putative lipoprotein LppP">
    <location>
        <begin position="31"/>
        <end position="175"/>
    </location>
</feature>
<feature type="lipid moiety-binding region" description="N-palmitoyl cysteine" evidence="1">
    <location>
        <position position="31"/>
    </location>
</feature>
<feature type="lipid moiety-binding region" description="S-diacylglycerol cysteine" evidence="1">
    <location>
        <position position="31"/>
    </location>
</feature>
<comment type="subcellular location">
    <subcellularLocation>
        <location evidence="1">Cell membrane</location>
        <topology evidence="1">Lipid-anchor</topology>
    </subcellularLocation>
</comment>
<proteinExistence type="evidence at protein level"/>
<accession>P9WK69</accession>
<accession>L0TC03</accession>
<accession>P65302</accession>
<accession>P71882</accession>
<name>LPPP_MYCTU</name>